<protein>
    <recommendedName>
        <fullName evidence="1">UPF0253 protein YaeP</fullName>
    </recommendedName>
</protein>
<proteinExistence type="inferred from homology"/>
<name>YAEP_SALCH</name>
<feature type="chain" id="PRO_0000277521" description="UPF0253 protein YaeP">
    <location>
        <begin position="1"/>
        <end position="66"/>
    </location>
</feature>
<sequence length="66" mass="7156">MEKYCELVRKRYAEIASGDLGYVPDALGCVLKVLNEVAADSALSESVREKAAYAAANLLVSDYVNE</sequence>
<gene>
    <name evidence="1" type="primary">yaeP</name>
    <name type="ordered locus">SCH_0238</name>
</gene>
<accession>Q57T17</accession>
<reference key="1">
    <citation type="journal article" date="2005" name="Nucleic Acids Res.">
        <title>The genome sequence of Salmonella enterica serovar Choleraesuis, a highly invasive and resistant zoonotic pathogen.</title>
        <authorList>
            <person name="Chiu C.-H."/>
            <person name="Tang P."/>
            <person name="Chu C."/>
            <person name="Hu S."/>
            <person name="Bao Q."/>
            <person name="Yu J."/>
            <person name="Chou Y.-Y."/>
            <person name="Wang H.-S."/>
            <person name="Lee Y.-S."/>
        </authorList>
    </citation>
    <scope>NUCLEOTIDE SEQUENCE [LARGE SCALE GENOMIC DNA]</scope>
    <source>
        <strain>SC-B67</strain>
    </source>
</reference>
<comment type="similarity">
    <text evidence="1">Belongs to the UPF0253 family.</text>
</comment>
<evidence type="ECO:0000255" key="1">
    <source>
        <dbReference type="HAMAP-Rule" id="MF_01064"/>
    </source>
</evidence>
<organism>
    <name type="scientific">Salmonella choleraesuis (strain SC-B67)</name>
    <dbReference type="NCBI Taxonomy" id="321314"/>
    <lineage>
        <taxon>Bacteria</taxon>
        <taxon>Pseudomonadati</taxon>
        <taxon>Pseudomonadota</taxon>
        <taxon>Gammaproteobacteria</taxon>
        <taxon>Enterobacterales</taxon>
        <taxon>Enterobacteriaceae</taxon>
        <taxon>Salmonella</taxon>
    </lineage>
</organism>
<dbReference type="EMBL" id="AE017220">
    <property type="protein sequence ID" value="AAX64144.1"/>
    <property type="molecule type" value="Genomic_DNA"/>
</dbReference>
<dbReference type="RefSeq" id="WP_001518678.1">
    <property type="nucleotide sequence ID" value="NC_006905.1"/>
</dbReference>
<dbReference type="SMR" id="Q57T17"/>
<dbReference type="KEGG" id="sec:SCH_0238"/>
<dbReference type="HOGENOM" id="CLU_190008_0_0_6"/>
<dbReference type="Proteomes" id="UP000000538">
    <property type="component" value="Chromosome"/>
</dbReference>
<dbReference type="HAMAP" id="MF_01064">
    <property type="entry name" value="UPF0253"/>
    <property type="match status" value="1"/>
</dbReference>
<dbReference type="InterPro" id="IPR009624">
    <property type="entry name" value="UPF0253"/>
</dbReference>
<dbReference type="NCBIfam" id="NF003436">
    <property type="entry name" value="PRK04964.1"/>
    <property type="match status" value="1"/>
</dbReference>
<dbReference type="Pfam" id="PF06786">
    <property type="entry name" value="UPF0253"/>
    <property type="match status" value="1"/>
</dbReference>